<comment type="subcellular location">
    <subcellularLocation>
        <location evidence="1">Cell inner membrane</location>
        <topology evidence="1">Multi-pass membrane protein</topology>
    </subcellularLocation>
</comment>
<comment type="similarity">
    <text evidence="1">Belongs to the UPF0060 family.</text>
</comment>
<sequence length="111" mass="11959">MALLKITLLFAVTAITEIVGCYLPWLVIKQGKSLWLLVPAALSLAIFAWLLTLHPTAAGRTYAAYGGMYVVVALIWLHFVEGVGLTRFDFLGATMALAGMAIIALQPISHS</sequence>
<feature type="chain" id="PRO_0000282226" description="UPF0060 membrane protein HCH_03337">
    <location>
        <begin position="1"/>
        <end position="111"/>
    </location>
</feature>
<feature type="transmembrane region" description="Helical" evidence="1">
    <location>
        <begin position="8"/>
        <end position="28"/>
    </location>
</feature>
<feature type="transmembrane region" description="Helical" evidence="1">
    <location>
        <begin position="33"/>
        <end position="53"/>
    </location>
</feature>
<feature type="transmembrane region" description="Helical" evidence="1">
    <location>
        <begin position="65"/>
        <end position="85"/>
    </location>
</feature>
<feature type="transmembrane region" description="Helical" evidence="1">
    <location>
        <begin position="88"/>
        <end position="108"/>
    </location>
</feature>
<dbReference type="EMBL" id="CP000155">
    <property type="protein sequence ID" value="ABC30092.1"/>
    <property type="molecule type" value="Genomic_DNA"/>
</dbReference>
<dbReference type="RefSeq" id="WP_011397161.1">
    <property type="nucleotide sequence ID" value="NC_007645.1"/>
</dbReference>
<dbReference type="SMR" id="Q2SGY2"/>
<dbReference type="KEGG" id="hch:HCH_03337"/>
<dbReference type="eggNOG" id="COG1742">
    <property type="taxonomic scope" value="Bacteria"/>
</dbReference>
<dbReference type="HOGENOM" id="CLU_117653_2_0_6"/>
<dbReference type="OrthoDB" id="123240at2"/>
<dbReference type="Proteomes" id="UP000000238">
    <property type="component" value="Chromosome"/>
</dbReference>
<dbReference type="GO" id="GO:0005886">
    <property type="term" value="C:plasma membrane"/>
    <property type="evidence" value="ECO:0007669"/>
    <property type="project" value="UniProtKB-SubCell"/>
</dbReference>
<dbReference type="HAMAP" id="MF_00010">
    <property type="entry name" value="UPF0060"/>
    <property type="match status" value="1"/>
</dbReference>
<dbReference type="InterPro" id="IPR003844">
    <property type="entry name" value="UPF0060"/>
</dbReference>
<dbReference type="NCBIfam" id="NF002586">
    <property type="entry name" value="PRK02237.1"/>
    <property type="match status" value="1"/>
</dbReference>
<dbReference type="PANTHER" id="PTHR36116">
    <property type="entry name" value="UPF0060 MEMBRANE PROTEIN YNFA"/>
    <property type="match status" value="1"/>
</dbReference>
<dbReference type="PANTHER" id="PTHR36116:SF1">
    <property type="entry name" value="UPF0060 MEMBRANE PROTEIN YNFA"/>
    <property type="match status" value="1"/>
</dbReference>
<dbReference type="Pfam" id="PF02694">
    <property type="entry name" value="UPF0060"/>
    <property type="match status" value="1"/>
</dbReference>
<dbReference type="SUPFAM" id="SSF103481">
    <property type="entry name" value="Multidrug resistance efflux transporter EmrE"/>
    <property type="match status" value="1"/>
</dbReference>
<gene>
    <name type="ordered locus">HCH_03337</name>
</gene>
<keyword id="KW-0997">Cell inner membrane</keyword>
<keyword id="KW-1003">Cell membrane</keyword>
<keyword id="KW-0472">Membrane</keyword>
<keyword id="KW-1185">Reference proteome</keyword>
<keyword id="KW-0812">Transmembrane</keyword>
<keyword id="KW-1133">Transmembrane helix</keyword>
<proteinExistence type="inferred from homology"/>
<organism>
    <name type="scientific">Hahella chejuensis (strain KCTC 2396)</name>
    <dbReference type="NCBI Taxonomy" id="349521"/>
    <lineage>
        <taxon>Bacteria</taxon>
        <taxon>Pseudomonadati</taxon>
        <taxon>Pseudomonadota</taxon>
        <taxon>Gammaproteobacteria</taxon>
        <taxon>Oceanospirillales</taxon>
        <taxon>Hahellaceae</taxon>
        <taxon>Hahella</taxon>
    </lineage>
</organism>
<accession>Q2SGY2</accession>
<protein>
    <recommendedName>
        <fullName evidence="1">UPF0060 membrane protein HCH_03337</fullName>
    </recommendedName>
</protein>
<evidence type="ECO:0000255" key="1">
    <source>
        <dbReference type="HAMAP-Rule" id="MF_00010"/>
    </source>
</evidence>
<reference key="1">
    <citation type="journal article" date="2005" name="Nucleic Acids Res.">
        <title>Genomic blueprint of Hahella chejuensis, a marine microbe producing an algicidal agent.</title>
        <authorList>
            <person name="Jeong H."/>
            <person name="Yim J.H."/>
            <person name="Lee C."/>
            <person name="Choi S.-H."/>
            <person name="Park Y.K."/>
            <person name="Yoon S.H."/>
            <person name="Hur C.-G."/>
            <person name="Kang H.-Y."/>
            <person name="Kim D."/>
            <person name="Lee H.H."/>
            <person name="Park K.H."/>
            <person name="Park S.-H."/>
            <person name="Park H.-S."/>
            <person name="Lee H.K."/>
            <person name="Oh T.K."/>
            <person name="Kim J.F."/>
        </authorList>
    </citation>
    <scope>NUCLEOTIDE SEQUENCE [LARGE SCALE GENOMIC DNA]</scope>
    <source>
        <strain>KCTC 2396</strain>
    </source>
</reference>
<name>Y3337_HAHCH</name>